<gene>
    <name type="primary">PRA1B4</name>
    <name type="ordered locus">At2g38360</name>
    <name type="ORF">T19C21.15</name>
</gene>
<reference key="1">
    <citation type="journal article" date="1999" name="Nature">
        <title>Sequence and analysis of chromosome 2 of the plant Arabidopsis thaliana.</title>
        <authorList>
            <person name="Lin X."/>
            <person name="Kaul S."/>
            <person name="Rounsley S.D."/>
            <person name="Shea T.P."/>
            <person name="Benito M.-I."/>
            <person name="Town C.D."/>
            <person name="Fujii C.Y."/>
            <person name="Mason T.M."/>
            <person name="Bowman C.L."/>
            <person name="Barnstead M.E."/>
            <person name="Feldblyum T.V."/>
            <person name="Buell C.R."/>
            <person name="Ketchum K.A."/>
            <person name="Lee J.J."/>
            <person name="Ronning C.M."/>
            <person name="Koo H.L."/>
            <person name="Moffat K.S."/>
            <person name="Cronin L.A."/>
            <person name="Shen M."/>
            <person name="Pai G."/>
            <person name="Van Aken S."/>
            <person name="Umayam L."/>
            <person name="Tallon L.J."/>
            <person name="Gill J.E."/>
            <person name="Adams M.D."/>
            <person name="Carrera A.J."/>
            <person name="Creasy T.H."/>
            <person name="Goodman H.M."/>
            <person name="Somerville C.R."/>
            <person name="Copenhaver G.P."/>
            <person name="Preuss D."/>
            <person name="Nierman W.C."/>
            <person name="White O."/>
            <person name="Eisen J.A."/>
            <person name="Salzberg S.L."/>
            <person name="Fraser C.M."/>
            <person name="Venter J.C."/>
        </authorList>
    </citation>
    <scope>NUCLEOTIDE SEQUENCE [LARGE SCALE GENOMIC DNA]</scope>
    <source>
        <strain>cv. Columbia</strain>
    </source>
</reference>
<reference key="2">
    <citation type="journal article" date="2017" name="Plant J.">
        <title>Araport11: a complete reannotation of the Arabidopsis thaliana reference genome.</title>
        <authorList>
            <person name="Cheng C.Y."/>
            <person name="Krishnakumar V."/>
            <person name="Chan A.P."/>
            <person name="Thibaud-Nissen F."/>
            <person name="Schobel S."/>
            <person name="Town C.D."/>
        </authorList>
    </citation>
    <scope>GENOME REANNOTATION</scope>
    <source>
        <strain>cv. Columbia</strain>
    </source>
</reference>
<reference key="3">
    <citation type="submission" date="2004-03" db="EMBL/GenBank/DDBJ databases">
        <title>Arabidopsis ORF clones.</title>
        <authorList>
            <person name="Shinn P."/>
            <person name="Chen H."/>
            <person name="Cheuk R.F."/>
            <person name="Kim C.J."/>
            <person name="Ecker J.R."/>
        </authorList>
    </citation>
    <scope>NUCLEOTIDE SEQUENCE [LARGE SCALE MRNA]</scope>
    <source>
        <strain>cv. Columbia</strain>
    </source>
</reference>
<reference key="4">
    <citation type="submission" date="2006-07" db="EMBL/GenBank/DDBJ databases">
        <title>Large-scale analysis of RIKEN Arabidopsis full-length (RAFL) cDNAs.</title>
        <authorList>
            <person name="Totoki Y."/>
            <person name="Seki M."/>
            <person name="Ishida J."/>
            <person name="Nakajima M."/>
            <person name="Enju A."/>
            <person name="Kamiya A."/>
            <person name="Narusaka M."/>
            <person name="Shin-i T."/>
            <person name="Nakagawa M."/>
            <person name="Sakamoto N."/>
            <person name="Oishi K."/>
            <person name="Kohara Y."/>
            <person name="Kobayashi M."/>
            <person name="Toyoda A."/>
            <person name="Sakaki Y."/>
            <person name="Sakurai T."/>
            <person name="Iida K."/>
            <person name="Akiyama K."/>
            <person name="Satou M."/>
            <person name="Toyoda T."/>
            <person name="Konagaya A."/>
            <person name="Carninci P."/>
            <person name="Kawai J."/>
            <person name="Hayashizaki Y."/>
            <person name="Shinozaki K."/>
        </authorList>
    </citation>
    <scope>NUCLEOTIDE SEQUENCE [LARGE SCALE MRNA]</scope>
    <source>
        <strain>cv. Columbia</strain>
    </source>
</reference>
<reference key="5">
    <citation type="journal article" date="2008" name="Plant Physiol.">
        <title>The PRA1 gene family in Arabidopsis.</title>
        <authorList>
            <person name="Alvim Kamei C.L."/>
            <person name="Boruc J."/>
            <person name="Vandepoele K."/>
            <person name="Van den Daele H."/>
            <person name="Maes S."/>
            <person name="Russinova E."/>
            <person name="Inze D."/>
            <person name="de Veylder L."/>
        </authorList>
    </citation>
    <scope>SUBCELLULAR LOCATION</scope>
    <scope>TISSUE SPECIFICITY</scope>
    <scope>INTERACTION WITH PRA1B1; PRA1B2; PRA1B3; PRA1B5; PRA1B6 AND PRA1E</scope>
    <scope>GENE FAMILY</scope>
    <scope>NOMENCLATURE</scope>
</reference>
<name>PR1B4_ARATH</name>
<comment type="function">
    <text evidence="1">May be involved in both secretory and endocytic intracellular trafficking in the endosomal/prevacuolar compartments.</text>
</comment>
<comment type="subunit">
    <text evidence="4">Interacts with PRA1B1, PRA1B2, PRA1B3, PRA1B5, PRA1B6 and PRA1E.</text>
</comment>
<comment type="subcellular location">
    <subcellularLocation>
        <location evidence="4">Endosome membrane</location>
        <topology evidence="4">Multi-pass membrane protein</topology>
    </subcellularLocation>
</comment>
<comment type="tissue specificity">
    <text evidence="4">Expressed in roots, lateral roots, lateral root caps, stomata and trichomes.</text>
</comment>
<comment type="similarity">
    <text evidence="5">Belongs to the PRA1 family.</text>
</comment>
<sequence>MASSAPPVLPISNPQTVPSAAPSSVESQPPIATPAFRNFINQITETVKNGLSKRRPWAELADRSALSKPESISDAAVRIRKNYSYFKVNYLTVATAIVGFSLVTHPFSLVFLLCLLASWLFLYLFRPTDQPIVLFGRTFSDRETLGCLILFSIFVIFLTDVGSVLVSAMMIGVALICAHGAFRAPEDLFLDEQEPAATGFLSFLGGAASSAAPAVIAARV</sequence>
<feature type="chain" id="PRO_0000352253" description="PRA1 family protein B4">
    <location>
        <begin position="1"/>
        <end position="220"/>
    </location>
</feature>
<feature type="transmembrane region" description="Helical" evidence="2">
    <location>
        <begin position="83"/>
        <end position="103"/>
    </location>
</feature>
<feature type="transmembrane region" description="Helical" evidence="2">
    <location>
        <begin position="105"/>
        <end position="125"/>
    </location>
</feature>
<feature type="transmembrane region" description="Helical" evidence="2">
    <location>
        <begin position="146"/>
        <end position="166"/>
    </location>
</feature>
<feature type="transmembrane region" description="Helical" evidence="2">
    <location>
        <begin position="170"/>
        <end position="190"/>
    </location>
</feature>
<feature type="transmembrane region" description="Helical" evidence="2">
    <location>
        <begin position="196"/>
        <end position="216"/>
    </location>
</feature>
<feature type="region of interest" description="Disordered" evidence="3">
    <location>
        <begin position="1"/>
        <end position="27"/>
    </location>
</feature>
<feature type="compositionally biased region" description="Polar residues" evidence="3">
    <location>
        <begin position="12"/>
        <end position="27"/>
    </location>
</feature>
<proteinExistence type="evidence at protein level"/>
<dbReference type="EMBL" id="AC004683">
    <property type="protein sequence ID" value="AAC28768.1"/>
    <property type="molecule type" value="Genomic_DNA"/>
</dbReference>
<dbReference type="EMBL" id="CP002685">
    <property type="protein sequence ID" value="AEC09527.1"/>
    <property type="molecule type" value="Genomic_DNA"/>
</dbReference>
<dbReference type="EMBL" id="BT010689">
    <property type="protein sequence ID" value="AAR20746.1"/>
    <property type="molecule type" value="mRNA"/>
</dbReference>
<dbReference type="EMBL" id="BT011785">
    <property type="protein sequence ID" value="AAS68109.1"/>
    <property type="molecule type" value="mRNA"/>
</dbReference>
<dbReference type="EMBL" id="AK229076">
    <property type="protein sequence ID" value="BAF00957.1"/>
    <property type="molecule type" value="mRNA"/>
</dbReference>
<dbReference type="PIR" id="T02509">
    <property type="entry name" value="T02509"/>
</dbReference>
<dbReference type="BioGRID" id="3758">
    <property type="interactions" value="7"/>
</dbReference>
<dbReference type="FunCoup" id="O80915">
    <property type="interactions" value="2026"/>
</dbReference>
<dbReference type="IntAct" id="O80915">
    <property type="interactions" value="7"/>
</dbReference>
<dbReference type="STRING" id="3702.O80915"/>
<dbReference type="GlyGen" id="O80915">
    <property type="glycosylation" value="1 site"/>
</dbReference>
<dbReference type="PaxDb" id="3702-AT2G38360.1"/>
<dbReference type="ProteomicsDB" id="234843"/>
<dbReference type="EnsemblPlants" id="AT2G38360.1">
    <property type="protein sequence ID" value="AT2G38360.1"/>
    <property type="gene ID" value="AT2G38360"/>
</dbReference>
<dbReference type="GeneID" id="818416"/>
<dbReference type="Gramene" id="AT2G38360.1">
    <property type="protein sequence ID" value="AT2G38360.1"/>
    <property type="gene ID" value="AT2G38360"/>
</dbReference>
<dbReference type="KEGG" id="ath:AT2G38360"/>
<dbReference type="Araport" id="AT2G38360"/>
<dbReference type="TAIR" id="AT2G38360">
    <property type="gene designation" value="PRA1.B4"/>
</dbReference>
<dbReference type="eggNOG" id="KOG3142">
    <property type="taxonomic scope" value="Eukaryota"/>
</dbReference>
<dbReference type="HOGENOM" id="CLU_060198_1_0_1"/>
<dbReference type="InParanoid" id="O80915"/>
<dbReference type="OMA" id="LAGSWIY"/>
<dbReference type="OrthoDB" id="63113at2759"/>
<dbReference type="PhylomeDB" id="O80915"/>
<dbReference type="PRO" id="PR:O80915"/>
<dbReference type="Proteomes" id="UP000006548">
    <property type="component" value="Chromosome 2"/>
</dbReference>
<dbReference type="ExpressionAtlas" id="O80915">
    <property type="expression patterns" value="baseline and differential"/>
</dbReference>
<dbReference type="GO" id="GO:0005783">
    <property type="term" value="C:endoplasmic reticulum"/>
    <property type="evidence" value="ECO:0000314"/>
    <property type="project" value="TAIR"/>
</dbReference>
<dbReference type="GO" id="GO:0005768">
    <property type="term" value="C:endosome"/>
    <property type="evidence" value="ECO:0007005"/>
    <property type="project" value="TAIR"/>
</dbReference>
<dbReference type="GO" id="GO:0010008">
    <property type="term" value="C:endosome membrane"/>
    <property type="evidence" value="ECO:0007669"/>
    <property type="project" value="UniProtKB-SubCell"/>
</dbReference>
<dbReference type="GO" id="GO:0005794">
    <property type="term" value="C:Golgi apparatus"/>
    <property type="evidence" value="ECO:0007005"/>
    <property type="project" value="TAIR"/>
</dbReference>
<dbReference type="GO" id="GO:0005802">
    <property type="term" value="C:trans-Golgi network"/>
    <property type="evidence" value="ECO:0007005"/>
    <property type="project" value="TAIR"/>
</dbReference>
<dbReference type="GO" id="GO:0016192">
    <property type="term" value="P:vesicle-mediated transport"/>
    <property type="evidence" value="ECO:0000314"/>
    <property type="project" value="TAIR"/>
</dbReference>
<dbReference type="InterPro" id="IPR004895">
    <property type="entry name" value="Prenylated_rab_accept_PRA1"/>
</dbReference>
<dbReference type="PANTHER" id="PTHR19317:SF34">
    <property type="entry name" value="PRA1 FAMILY PROTEIN-RELATED"/>
    <property type="match status" value="1"/>
</dbReference>
<dbReference type="PANTHER" id="PTHR19317">
    <property type="entry name" value="PRENYLATED RAB ACCEPTOR 1-RELATED"/>
    <property type="match status" value="1"/>
</dbReference>
<dbReference type="Pfam" id="PF03208">
    <property type="entry name" value="PRA1"/>
    <property type="match status" value="1"/>
</dbReference>
<evidence type="ECO:0000250" key="1"/>
<evidence type="ECO:0000255" key="2"/>
<evidence type="ECO:0000256" key="3">
    <source>
        <dbReference type="SAM" id="MobiDB-lite"/>
    </source>
</evidence>
<evidence type="ECO:0000269" key="4">
    <source>
    </source>
</evidence>
<evidence type="ECO:0000305" key="5"/>
<accession>O80915</accession>
<keyword id="KW-0967">Endosome</keyword>
<keyword id="KW-0472">Membrane</keyword>
<keyword id="KW-1185">Reference proteome</keyword>
<keyword id="KW-0812">Transmembrane</keyword>
<keyword id="KW-1133">Transmembrane helix</keyword>
<keyword id="KW-0813">Transport</keyword>
<organism>
    <name type="scientific">Arabidopsis thaliana</name>
    <name type="common">Mouse-ear cress</name>
    <dbReference type="NCBI Taxonomy" id="3702"/>
    <lineage>
        <taxon>Eukaryota</taxon>
        <taxon>Viridiplantae</taxon>
        <taxon>Streptophyta</taxon>
        <taxon>Embryophyta</taxon>
        <taxon>Tracheophyta</taxon>
        <taxon>Spermatophyta</taxon>
        <taxon>Magnoliopsida</taxon>
        <taxon>eudicotyledons</taxon>
        <taxon>Gunneridae</taxon>
        <taxon>Pentapetalae</taxon>
        <taxon>rosids</taxon>
        <taxon>malvids</taxon>
        <taxon>Brassicales</taxon>
        <taxon>Brassicaceae</taxon>
        <taxon>Camelineae</taxon>
        <taxon>Arabidopsis</taxon>
    </lineage>
</organism>
<protein>
    <recommendedName>
        <fullName>PRA1 family protein B4</fullName>
        <shortName>AtPRA1.B4</shortName>
    </recommendedName>
</protein>